<reference key="1">
    <citation type="journal article" date="1991" name="J. Bacteriol.">
        <title>Identification and characterization of dppA, an Escherichia coli gene encoding a periplasmic dipeptide transport protein.</title>
        <authorList>
            <person name="Olson E.R."/>
            <person name="Dunyak D.S."/>
            <person name="Jurss L.M."/>
            <person name="Poorman R.A."/>
        </authorList>
    </citation>
    <scope>NUCLEOTIDE SEQUENCE [GENOMIC DNA]</scope>
    <scope>FUNCTION</scope>
    <scope>SUBCELLULAR LOCATION</scope>
    <scope>INDUCTION</scope>
    <scope>DISRUPTION PHENOTYPE</scope>
    <source>
        <strain>K12</strain>
    </source>
</reference>
<reference key="2">
    <citation type="journal article" date="1991" name="Mol. Microbiol.">
        <title>Peptide transport and chemotaxis in Escherichia coli and Salmonella typhimurium: characterization of the dipeptide permease (Dpp) and the dipeptide-binding protein.</title>
        <authorList>
            <person name="Abouhamad W.N."/>
            <person name="Manson M."/>
            <person name="Gibson M.M."/>
            <person name="Higgins C.F."/>
        </authorList>
    </citation>
    <scope>NUCLEOTIDE SEQUENCE [GENOMIC DNA]</scope>
    <scope>PROTEIN SEQUENCE OF 29-50</scope>
    <source>
        <strain>K12</strain>
    </source>
</reference>
<reference key="3">
    <citation type="journal article" date="1994" name="Mol. Microbiol.">
        <title>The dipeptide permease of Escherichia coli closely resembles other bacterial transport systems and shows growth-phase-dependent expression.</title>
        <authorList>
            <person name="Abouhamad W.N."/>
            <person name="Manson M.D."/>
        </authorList>
    </citation>
    <scope>NUCLEOTIDE SEQUENCE [GENOMIC DNA]</scope>
    <scope>FUNCTION</scope>
    <scope>SUBUNIT</scope>
    <source>
        <strain>K12 / MM500</strain>
    </source>
</reference>
<reference key="4">
    <citation type="journal article" date="1994" name="Nucleic Acids Res.">
        <title>Analysis of the Escherichia coli genome. V. DNA sequence of the region from 76.0 to 81.5 minutes.</title>
        <authorList>
            <person name="Sofia H.J."/>
            <person name="Burland V."/>
            <person name="Daniels D.L."/>
            <person name="Plunkett G. III"/>
            <person name="Blattner F.R."/>
        </authorList>
    </citation>
    <scope>NUCLEOTIDE SEQUENCE [LARGE SCALE GENOMIC DNA]</scope>
    <source>
        <strain>K12 / MG1655 / ATCC 47076</strain>
    </source>
</reference>
<reference key="5">
    <citation type="journal article" date="1997" name="Science">
        <title>The complete genome sequence of Escherichia coli K-12.</title>
        <authorList>
            <person name="Blattner F.R."/>
            <person name="Plunkett G. III"/>
            <person name="Bloch C.A."/>
            <person name="Perna N.T."/>
            <person name="Burland V."/>
            <person name="Riley M."/>
            <person name="Collado-Vides J."/>
            <person name="Glasner J.D."/>
            <person name="Rode C.K."/>
            <person name="Mayhew G.F."/>
            <person name="Gregor J."/>
            <person name="Davis N.W."/>
            <person name="Kirkpatrick H.A."/>
            <person name="Goeden M.A."/>
            <person name="Rose D.J."/>
            <person name="Mau B."/>
            <person name="Shao Y."/>
        </authorList>
    </citation>
    <scope>NUCLEOTIDE SEQUENCE [LARGE SCALE GENOMIC DNA]</scope>
    <source>
        <strain>K12 / MG1655 / ATCC 47076</strain>
    </source>
</reference>
<reference key="6">
    <citation type="journal article" date="2006" name="Mol. Syst. Biol.">
        <title>Highly accurate genome sequences of Escherichia coli K-12 strains MG1655 and W3110.</title>
        <authorList>
            <person name="Hayashi K."/>
            <person name="Morooka N."/>
            <person name="Yamamoto Y."/>
            <person name="Fujita K."/>
            <person name="Isono K."/>
            <person name="Choi S."/>
            <person name="Ohtsubo E."/>
            <person name="Baba T."/>
            <person name="Wanner B.L."/>
            <person name="Mori H."/>
            <person name="Horiuchi T."/>
        </authorList>
    </citation>
    <scope>NUCLEOTIDE SEQUENCE [LARGE SCALE GENOMIC DNA]</scope>
    <source>
        <strain>K12 / W3110 / ATCC 27325 / DSM 5911</strain>
    </source>
</reference>
<reference key="7">
    <citation type="journal article" date="1999" name="Microbiology">
        <title>Substrate specificity of the periplasmic dipeptide-binding protein from Escherichia coli: experimental basis for the design of peptide prodrugs.</title>
        <authorList>
            <person name="Smith M.W."/>
            <person name="Tyreman D.R."/>
            <person name="Payne G.M."/>
            <person name="Marshall N.J."/>
            <person name="Payne J.W."/>
        </authorList>
    </citation>
    <scope>PROTEIN SEQUENCE OF 29-61</scope>
    <scope>FUNCTION</scope>
    <scope>BINDING SPECIFICITY</scope>
    <scope>DOMAIN</scope>
    <source>
        <strain>K12</strain>
    </source>
</reference>
<reference key="8">
    <citation type="journal article" date="1997" name="Electrophoresis">
        <title>Comparing the predicted and observed properties of proteins encoded in the genome of Escherichia coli K-12.</title>
        <authorList>
            <person name="Link A.J."/>
            <person name="Robison K."/>
            <person name="Church G.M."/>
        </authorList>
    </citation>
    <scope>PROTEIN SEQUENCE OF 29-40</scope>
    <source>
        <strain>K12 / EMG2</strain>
    </source>
</reference>
<reference key="9">
    <citation type="journal article" date="1998" name="J. Mol. Biol.">
        <title>Protein identification with N and C-terminal sequence tags in proteome projects.</title>
        <authorList>
            <person name="Wilkins M.R."/>
            <person name="Gasteiger E."/>
            <person name="Tonella L."/>
            <person name="Ou K."/>
            <person name="Tyler M."/>
            <person name="Sanchez J.-C."/>
            <person name="Gooley A.A."/>
            <person name="Walsh B.J."/>
            <person name="Bairoch A."/>
            <person name="Appel R.D."/>
            <person name="Williams K.L."/>
            <person name="Hochstrasser D.F."/>
        </authorList>
    </citation>
    <scope>PROTEIN SEQUENCE OF 29-32</scope>
    <source>
        <strain>K12 / W3110 / ATCC 27325 / DSM 5911</strain>
    </source>
</reference>
<reference key="10">
    <citation type="journal article" date="1986" name="Nature">
        <title>Peptide chemotaxis in E. coli involves the Tap signal transducer and the dipeptide permease.</title>
        <authorList>
            <person name="Manson M.D."/>
            <person name="Blank V."/>
            <person name="Brade G."/>
            <person name="Higgins C.F."/>
        </authorList>
    </citation>
    <scope>FUNCTION</scope>
</reference>
<reference key="11">
    <citation type="journal article" date="1993" name="J. Bacteriol.">
        <title>The periplasmic dipeptide permease system transports 5-aminolevulinic acid in Escherichia coli.</title>
        <authorList>
            <person name="Verkamp E."/>
            <person name="Backman V.M."/>
            <person name="Bjoernsson J.M."/>
            <person name="Soell D."/>
            <person name="Eggertsson G."/>
        </authorList>
    </citation>
    <scope>FUNCTION IN 5-AMINOLEVULINIC ACID TRANSPORT</scope>
</reference>
<reference key="12">
    <citation type="submission" date="1995-06" db="UniProtKB">
        <authorList>
            <person name="Dunten P."/>
        </authorList>
    </citation>
    <scope>DISULFIDE BONDS</scope>
</reference>
<reference key="13">
    <citation type="journal article" date="1997" name="Electrophoresis">
        <title>Escherichia coli proteome analysis using the gene-protein database.</title>
        <authorList>
            <person name="VanBogelen R.A."/>
            <person name="Abshire K.Z."/>
            <person name="Moldover B."/>
            <person name="Olson E.R."/>
            <person name="Neidhardt F.C."/>
        </authorList>
    </citation>
    <scope>IDENTIFICATION BY 2D-GEL</scope>
</reference>
<reference key="14">
    <citation type="journal article" date="2006" name="Proc. Natl. Acad. Sci. U.S.A.">
        <title>The housekeeping dipeptide permease is the Escherichia coli heme transporter and functions with two optional peptide binding proteins.</title>
        <authorList>
            <person name="Letoffe S."/>
            <person name="Delepelaire P."/>
            <person name="Wandersman C."/>
        </authorList>
    </citation>
    <scope>FUNCTION IN HEME TRANSPORT</scope>
    <scope>ACTIVITY REGULATION</scope>
    <scope>DISRUPTION PHENOTYPE</scope>
</reference>
<reference evidence="16" key="15">
    <citation type="journal article" date="1995" name="Biochemistry">
        <title>2-A resolution structure of DppA, a periplasmic dipeptide transport/chemosensory receptor.</title>
        <authorList>
            <person name="Nickitenko A.V."/>
            <person name="Trakhanov S."/>
            <person name="Quiocho F.A."/>
        </authorList>
    </citation>
    <scope>X-RAY CRYSTALLOGRAPHY (2.0 ANGSTROMS) OF 29-535</scope>
    <scope>DOMAIN</scope>
</reference>
<reference evidence="17" key="16">
    <citation type="journal article" date="1995" name="Protein Sci.">
        <title>Crystal structure of the dipeptide binding protein from Escherichia coli involved in active transport and chemotaxis.</title>
        <authorList>
            <person name="Dunten P."/>
            <person name="Mowbray S.L."/>
        </authorList>
    </citation>
    <scope>X-RAY CRYSTALLOGRAPHY (3.2 ANGSTROMS) OF 29-535 IN COMPLEX WITH DIPEPTIDE GLY-LEU</scope>
    <scope>FUNCTION</scope>
    <scope>DOMAIN</scope>
</reference>
<dbReference type="EMBL" id="M35045">
    <property type="protein sequence ID" value="AAA23707.1"/>
    <property type="molecule type" value="Genomic_DNA"/>
</dbReference>
<dbReference type="EMBL" id="X58051">
    <property type="protein sequence ID" value="CAA41090.1"/>
    <property type="molecule type" value="Genomic_DNA"/>
</dbReference>
<dbReference type="EMBL" id="L08399">
    <property type="protein sequence ID" value="AAA23702.1"/>
    <property type="molecule type" value="Genomic_DNA"/>
</dbReference>
<dbReference type="EMBL" id="U00039">
    <property type="protein sequence ID" value="AAB18522.1"/>
    <property type="molecule type" value="Genomic_DNA"/>
</dbReference>
<dbReference type="EMBL" id="U00096">
    <property type="protein sequence ID" value="AAC76569.1"/>
    <property type="molecule type" value="Genomic_DNA"/>
</dbReference>
<dbReference type="EMBL" id="AP009048">
    <property type="protein sequence ID" value="BAE77750.1"/>
    <property type="molecule type" value="Genomic_DNA"/>
</dbReference>
<dbReference type="PIR" id="A39194">
    <property type="entry name" value="A39194"/>
</dbReference>
<dbReference type="RefSeq" id="NP_418001.1">
    <property type="nucleotide sequence ID" value="NC_000913.3"/>
</dbReference>
<dbReference type="RefSeq" id="WP_001222883.1">
    <property type="nucleotide sequence ID" value="NZ_STEB01000018.1"/>
</dbReference>
<dbReference type="PDB" id="1DPE">
    <property type="method" value="X-ray"/>
    <property type="resolution" value="2.00 A"/>
    <property type="chains" value="A=29-535"/>
</dbReference>
<dbReference type="PDB" id="1DPP">
    <property type="method" value="X-ray"/>
    <property type="resolution" value="3.20 A"/>
    <property type="chains" value="A/C/E/G=29-535"/>
</dbReference>
<dbReference type="PDB" id="8Z1Y">
    <property type="method" value="EM"/>
    <property type="resolution" value="2.73 A"/>
    <property type="chains" value="F=1-535"/>
</dbReference>
<dbReference type="PDBsum" id="1DPE"/>
<dbReference type="PDBsum" id="1DPP"/>
<dbReference type="PDBsum" id="8Z1Y"/>
<dbReference type="EMDB" id="EMD-39740"/>
<dbReference type="SMR" id="P23847"/>
<dbReference type="BioGRID" id="4259528">
    <property type="interactions" value="233"/>
</dbReference>
<dbReference type="ComplexPortal" id="CPX-4345">
    <property type="entry name" value="Heme/dipeptide ABC transporter complex, dppA variant"/>
</dbReference>
<dbReference type="DIP" id="DIP-9467N"/>
<dbReference type="FunCoup" id="P23847">
    <property type="interactions" value="328"/>
</dbReference>
<dbReference type="IntAct" id="P23847">
    <property type="interactions" value="6"/>
</dbReference>
<dbReference type="STRING" id="511145.b3544"/>
<dbReference type="jPOST" id="P23847"/>
<dbReference type="PaxDb" id="511145-b3544"/>
<dbReference type="EnsemblBacteria" id="AAC76569">
    <property type="protein sequence ID" value="AAC76569"/>
    <property type="gene ID" value="b3544"/>
</dbReference>
<dbReference type="GeneID" id="75201993"/>
<dbReference type="GeneID" id="948062"/>
<dbReference type="KEGG" id="ecj:JW3513"/>
<dbReference type="KEGG" id="eco:b3544"/>
<dbReference type="KEGG" id="ecoc:C3026_19210"/>
<dbReference type="PATRIC" id="fig|1411691.4.peg.3170"/>
<dbReference type="EchoBASE" id="EB0244"/>
<dbReference type="eggNOG" id="COG0747">
    <property type="taxonomic scope" value="Bacteria"/>
</dbReference>
<dbReference type="HOGENOM" id="CLU_017028_7_0_6"/>
<dbReference type="InParanoid" id="P23847"/>
<dbReference type="OMA" id="YIAYNVM"/>
<dbReference type="OrthoDB" id="9801912at2"/>
<dbReference type="PhylomeDB" id="P23847"/>
<dbReference type="BioCyc" id="EcoCyc:DPPA-MONOMER"/>
<dbReference type="BioCyc" id="MetaCyc:DPPA-MONOMER"/>
<dbReference type="EvolutionaryTrace" id="P23847"/>
<dbReference type="PRO" id="PR:P23847"/>
<dbReference type="Proteomes" id="UP000000625">
    <property type="component" value="Chromosome"/>
</dbReference>
<dbReference type="GO" id="GO:0055052">
    <property type="term" value="C:ATP-binding cassette (ABC) transporter complex, substrate-binding subunit-containing"/>
    <property type="evidence" value="ECO:0000303"/>
    <property type="project" value="ComplexPortal"/>
</dbReference>
<dbReference type="GO" id="GO:0016020">
    <property type="term" value="C:membrane"/>
    <property type="evidence" value="ECO:0000303"/>
    <property type="project" value="ComplexPortal"/>
</dbReference>
<dbReference type="GO" id="GO:0030288">
    <property type="term" value="C:outer membrane-bounded periplasmic space"/>
    <property type="evidence" value="ECO:0000314"/>
    <property type="project" value="EcoCyc"/>
</dbReference>
<dbReference type="GO" id="GO:0071916">
    <property type="term" value="F:dipeptide transmembrane transporter activity"/>
    <property type="evidence" value="ECO:0000315"/>
    <property type="project" value="EcoCyc"/>
</dbReference>
<dbReference type="GO" id="GO:0020037">
    <property type="term" value="F:heme binding"/>
    <property type="evidence" value="ECO:0000353"/>
    <property type="project" value="EcoCyc"/>
</dbReference>
<dbReference type="GO" id="GO:0042277">
    <property type="term" value="F:peptide binding"/>
    <property type="evidence" value="ECO:0000314"/>
    <property type="project" value="EcoCyc"/>
</dbReference>
<dbReference type="GO" id="GO:1904680">
    <property type="term" value="F:peptide transmembrane transporter activity"/>
    <property type="evidence" value="ECO:0000318"/>
    <property type="project" value="GO_Central"/>
</dbReference>
<dbReference type="GO" id="GO:0061077">
    <property type="term" value="P:chaperone-mediated protein folding"/>
    <property type="evidence" value="ECO:0000314"/>
    <property type="project" value="EcoCyc"/>
</dbReference>
<dbReference type="GO" id="GO:0042938">
    <property type="term" value="P:dipeptide transport"/>
    <property type="evidence" value="ECO:0000315"/>
    <property type="project" value="EcoCyc"/>
</dbReference>
<dbReference type="GO" id="GO:0035351">
    <property type="term" value="P:heme transmembrane transport"/>
    <property type="evidence" value="ECO:0000303"/>
    <property type="project" value="ComplexPortal"/>
</dbReference>
<dbReference type="GO" id="GO:0015886">
    <property type="term" value="P:heme transport"/>
    <property type="evidence" value="ECO:0000269"/>
    <property type="project" value="EcoCyc"/>
</dbReference>
<dbReference type="GO" id="GO:0050918">
    <property type="term" value="P:positive chemotaxis"/>
    <property type="evidence" value="ECO:0000269"/>
    <property type="project" value="EcoCyc"/>
</dbReference>
<dbReference type="GO" id="GO:0015031">
    <property type="term" value="P:protein transport"/>
    <property type="evidence" value="ECO:0007669"/>
    <property type="project" value="UniProtKB-KW"/>
</dbReference>
<dbReference type="CDD" id="cd08493">
    <property type="entry name" value="PBP2_DppA_like"/>
    <property type="match status" value="1"/>
</dbReference>
<dbReference type="FunFam" id="3.10.105.10:FF:000002">
    <property type="entry name" value="Dipeptide ABC transporter, substrate-binding protein"/>
    <property type="match status" value="1"/>
</dbReference>
<dbReference type="FunFam" id="3.40.190.10:FF:000036">
    <property type="entry name" value="Dipeptide ABC transporter, substrate-binding protein"/>
    <property type="match status" value="1"/>
</dbReference>
<dbReference type="FunFam" id="3.90.76.10:FF:000002">
    <property type="entry name" value="Dipeptide ABC transporter, substrate-binding protein"/>
    <property type="match status" value="1"/>
</dbReference>
<dbReference type="Gene3D" id="3.90.76.10">
    <property type="entry name" value="Dipeptide-binding Protein, Domain 1"/>
    <property type="match status" value="1"/>
</dbReference>
<dbReference type="Gene3D" id="3.10.105.10">
    <property type="entry name" value="Dipeptide-binding Protein, Domain 3"/>
    <property type="match status" value="1"/>
</dbReference>
<dbReference type="Gene3D" id="3.40.190.10">
    <property type="entry name" value="Periplasmic binding protein-like II"/>
    <property type="match status" value="1"/>
</dbReference>
<dbReference type="InterPro" id="IPR050017">
    <property type="entry name" value="DppA_dipep"/>
</dbReference>
<dbReference type="InterPro" id="IPR030678">
    <property type="entry name" value="Peptide/Ni-bd"/>
</dbReference>
<dbReference type="InterPro" id="IPR039424">
    <property type="entry name" value="SBP_5"/>
</dbReference>
<dbReference type="InterPro" id="IPR023765">
    <property type="entry name" value="SBP_5_CS"/>
</dbReference>
<dbReference type="InterPro" id="IPR000914">
    <property type="entry name" value="SBP_5_dom"/>
</dbReference>
<dbReference type="NCBIfam" id="NF043070">
    <property type="entry name" value="DppA_dipep"/>
    <property type="match status" value="1"/>
</dbReference>
<dbReference type="PANTHER" id="PTHR30290:SF38">
    <property type="entry name" value="D,D-DIPEPTIDE-BINDING PERIPLASMIC PROTEIN DDPA-RELATED"/>
    <property type="match status" value="1"/>
</dbReference>
<dbReference type="PANTHER" id="PTHR30290">
    <property type="entry name" value="PERIPLASMIC BINDING COMPONENT OF ABC TRANSPORTER"/>
    <property type="match status" value="1"/>
</dbReference>
<dbReference type="Pfam" id="PF00496">
    <property type="entry name" value="SBP_bac_5"/>
    <property type="match status" value="1"/>
</dbReference>
<dbReference type="PIRSF" id="PIRSF002741">
    <property type="entry name" value="MppA"/>
    <property type="match status" value="1"/>
</dbReference>
<dbReference type="SUPFAM" id="SSF53850">
    <property type="entry name" value="Periplasmic binding protein-like II"/>
    <property type="match status" value="1"/>
</dbReference>
<dbReference type="PROSITE" id="PS01040">
    <property type="entry name" value="SBP_BACTERIAL_5"/>
    <property type="match status" value="1"/>
</dbReference>
<gene>
    <name evidence="13 14" type="primary">dppA</name>
    <name type="ordered locus">b3544</name>
    <name type="ordered locus">JW3513</name>
</gene>
<name>DPPA_ECOLI</name>
<feature type="signal peptide" evidence="4 10 11">
    <location>
        <begin position="1"/>
        <end position="28"/>
    </location>
</feature>
<feature type="chain" id="PRO_0000031789" description="Dipeptide-binding protein">
    <location>
        <begin position="29"/>
        <end position="535"/>
    </location>
</feature>
<feature type="binding site" evidence="9 17">
    <location>
        <begin position="48"/>
        <end position="50"/>
    </location>
    <ligand>
        <name>glycyl-L-leucine</name>
        <dbReference type="ChEBI" id="CHEBI:143163"/>
    </ligand>
</feature>
<feature type="binding site" evidence="9 17">
    <location>
        <begin position="383"/>
        <end position="385"/>
    </location>
    <ligand>
        <name>glycyl-L-leucine</name>
        <dbReference type="ChEBI" id="CHEBI:143163"/>
    </ligand>
</feature>
<feature type="binding site" evidence="9 17">
    <location>
        <begin position="433"/>
        <end position="436"/>
    </location>
    <ligand>
        <name>glycyl-L-leucine</name>
        <dbReference type="ChEBI" id="CHEBI:143163"/>
    </ligand>
</feature>
<feature type="disulfide bond" evidence="12">
    <location>
        <begin position="34"/>
        <end position="262"/>
    </location>
</feature>
<feature type="disulfide bond" evidence="12">
    <location>
        <begin position="450"/>
        <end position="463"/>
    </location>
</feature>
<feature type="strand" evidence="18">
    <location>
        <begin position="30"/>
        <end position="37"/>
    </location>
</feature>
<feature type="helix" evidence="18">
    <location>
        <begin position="44"/>
        <end position="46"/>
    </location>
</feature>
<feature type="helix" evidence="18">
    <location>
        <begin position="50"/>
        <end position="55"/>
    </location>
</feature>
<feature type="helix" evidence="18">
    <location>
        <begin position="57"/>
        <end position="60"/>
    </location>
</feature>
<feature type="strand" evidence="18">
    <location>
        <begin position="64"/>
        <end position="67"/>
    </location>
</feature>
<feature type="strand" evidence="18">
    <location>
        <begin position="74"/>
        <end position="84"/>
    </location>
</feature>
<feature type="strand" evidence="18">
    <location>
        <begin position="90"/>
        <end position="95"/>
    </location>
</feature>
<feature type="helix" evidence="18">
    <location>
        <begin position="115"/>
        <end position="126"/>
    </location>
</feature>
<feature type="turn" evidence="18">
    <location>
        <begin position="131"/>
        <end position="134"/>
    </location>
</feature>
<feature type="helix" evidence="18">
    <location>
        <begin position="135"/>
        <end position="137"/>
    </location>
</feature>
<feature type="helix" evidence="18">
    <location>
        <begin position="141"/>
        <end position="145"/>
    </location>
</feature>
<feature type="helix" evidence="18">
    <location>
        <begin position="148"/>
        <end position="151"/>
    </location>
</feature>
<feature type="strand" evidence="18">
    <location>
        <begin position="152"/>
        <end position="159"/>
    </location>
</feature>
<feature type="strand" evidence="18">
    <location>
        <begin position="162"/>
        <end position="169"/>
    </location>
</feature>
<feature type="helix" evidence="18">
    <location>
        <begin position="174"/>
        <end position="177"/>
    </location>
</feature>
<feature type="helix" evidence="18">
    <location>
        <begin position="181"/>
        <end position="183"/>
    </location>
</feature>
<feature type="helix" evidence="18">
    <location>
        <begin position="188"/>
        <end position="196"/>
    </location>
</feature>
<feature type="helix" evidence="18">
    <location>
        <begin position="202"/>
        <end position="205"/>
    </location>
</feature>
<feature type="strand" evidence="18">
    <location>
        <begin position="210"/>
        <end position="219"/>
    </location>
</feature>
<feature type="turn" evidence="18">
    <location>
        <begin position="220"/>
        <end position="222"/>
    </location>
</feature>
<feature type="strand" evidence="18">
    <location>
        <begin position="223"/>
        <end position="228"/>
    </location>
</feature>
<feature type="strand" evidence="18">
    <location>
        <begin position="240"/>
        <end position="246"/>
    </location>
</feature>
<feature type="helix" evidence="18">
    <location>
        <begin position="250"/>
        <end position="258"/>
    </location>
</feature>
<feature type="helix" evidence="18">
    <location>
        <begin position="270"/>
        <end position="272"/>
    </location>
</feature>
<feature type="helix" evidence="18">
    <location>
        <begin position="273"/>
        <end position="278"/>
    </location>
</feature>
<feature type="strand" evidence="18">
    <location>
        <begin position="282"/>
        <end position="288"/>
    </location>
</feature>
<feature type="strand" evidence="18">
    <location>
        <begin position="290"/>
        <end position="297"/>
    </location>
</feature>
<feature type="turn" evidence="18">
    <location>
        <begin position="302"/>
        <end position="305"/>
    </location>
</feature>
<feature type="helix" evidence="18">
    <location>
        <begin position="307"/>
        <end position="315"/>
    </location>
</feature>
<feature type="helix" evidence="18">
    <location>
        <begin position="319"/>
        <end position="327"/>
    </location>
</feature>
<feature type="strand" evidence="18">
    <location>
        <begin position="330"/>
        <end position="333"/>
    </location>
</feature>
<feature type="strand" evidence="18">
    <location>
        <begin position="335"/>
        <end position="338"/>
    </location>
</feature>
<feature type="helix" evidence="18">
    <location>
        <begin position="356"/>
        <end position="365"/>
    </location>
</feature>
<feature type="strand" evidence="18">
    <location>
        <begin position="372"/>
        <end position="377"/>
    </location>
</feature>
<feature type="helix" evidence="18">
    <location>
        <begin position="389"/>
        <end position="401"/>
    </location>
</feature>
<feature type="turn" evidence="18">
    <location>
        <begin position="402"/>
        <end position="404"/>
    </location>
</feature>
<feature type="strand" evidence="18">
    <location>
        <begin position="405"/>
        <end position="410"/>
    </location>
</feature>
<feature type="helix" evidence="18">
    <location>
        <begin position="414"/>
        <end position="422"/>
    </location>
</feature>
<feature type="strand" evidence="18">
    <location>
        <begin position="427"/>
        <end position="434"/>
    </location>
</feature>
<feature type="strand" evidence="18">
    <location>
        <begin position="436"/>
        <end position="438"/>
    </location>
</feature>
<feature type="helix" evidence="18">
    <location>
        <begin position="441"/>
        <end position="448"/>
    </location>
</feature>
<feature type="helix" evidence="18">
    <location>
        <begin position="450"/>
        <end position="455"/>
    </location>
</feature>
<feature type="helix" evidence="18">
    <location>
        <begin position="465"/>
        <end position="476"/>
    </location>
</feature>
<feature type="helix" evidence="18">
    <location>
        <begin position="480"/>
        <end position="497"/>
    </location>
</feature>
<feature type="strand" evidence="18">
    <location>
        <begin position="499"/>
        <end position="513"/>
    </location>
</feature>
<feature type="strand" evidence="18">
    <location>
        <begin position="516"/>
        <end position="518"/>
    </location>
</feature>
<protein>
    <recommendedName>
        <fullName evidence="13 14">Dipeptide-binding protein</fullName>
        <shortName evidence="14">DBP</shortName>
    </recommendedName>
    <alternativeName>
        <fullName evidence="13">Periplasmic dipeptide transport protein</fullName>
    </alternativeName>
</protein>
<keyword id="KW-0002">3D-structure</keyword>
<keyword id="KW-0145">Chemotaxis</keyword>
<keyword id="KW-0903">Direct protein sequencing</keyword>
<keyword id="KW-1015">Disulfide bond</keyword>
<keyword id="KW-0571">Peptide transport</keyword>
<keyword id="KW-0574">Periplasm</keyword>
<keyword id="KW-0653">Protein transport</keyword>
<keyword id="KW-1185">Reference proteome</keyword>
<keyword id="KW-0732">Signal</keyword>
<keyword id="KW-0813">Transport</keyword>
<accession>P23847</accession>
<accession>Q2M7K6</accession>
<comment type="function">
    <text evidence="1 3 5 6 9">Part of the ABC transporter DppABCDF involved in dipeptide transport (PubMed:10537211, PubMed:1702779, PubMed:7536291). Binds dipeptides and accepts a wide range of side chains, including small neutral, bulky hydrophobic, and positively and negatively charged groups (PubMed:10537211). Tripeptides are poor substrates (PubMed:10537211). DppA alone controls the specificity of the Dpp transporter (PubMed:10537211). In addition, plays a role in chemotaxis toward peptides via interaction with the chemotaxis protein Tap (PubMed:3520334, PubMed:8563629).</text>
</comment>
<comment type="function">
    <text evidence="2 7">Binds heme. When a foreign outer membrane heme receptor is expressed in E.coli, DppABCDF can also transport heme and its precursor, 5-aminolevulinic acid (ALA), from the periplasm into the cytoplasm.</text>
</comment>
<comment type="activity regulation">
    <text evidence="2">Heme binding is inhibited by dipeptide.</text>
</comment>
<comment type="subunit">
    <text evidence="6">The complex is composed of two ATP-binding proteins (DppD and DppF), two transmembrane proteins (DppB and DppC) and a solute-binding protein (DppA).</text>
</comment>
<comment type="subcellular location">
    <subcellularLocation>
        <location evidence="3">Periplasm</location>
    </subcellularLocation>
</comment>
<comment type="induction">
    <text evidence="3">Expression is repressed by the presence of casamino acids.</text>
</comment>
<comment type="domain">
    <text evidence="1 8 9">Consists of two distinct domains (I and II) connected by two strands that presumably function as a hinge (PubMed:8527431, PubMed:8563629). Undergoes conformational change upon substrate binding (PubMed:10537211).</text>
</comment>
<comment type="disruption phenotype">
    <text evidence="2 3">Inactivation of the gene results in the inability of a proline auxotroph to utilize Pro-Gly as a proline source (PubMed:1702779). Inactivation of the gene has no effect on iron-heme utilization, but the double mppA dppA mutant is unable to use heme as iron source (PubMed:16905647).</text>
</comment>
<comment type="similarity">
    <text evidence="15">Belongs to the bacterial solute-binding protein 5 family.</text>
</comment>
<sequence length="535" mass="60294">MRISLKKSGMLKLGLSLVAMTVAASVQAKTLVYCSEGSPEGFNPQLFTSGTTYDASSVPLYNRLVEFKIGTTEVIPGLAEKWEVSEDGKTYTFHLRKGVKWHDNKEFKPTRELNADDVVFSFDRQKNAQNPYHKVSGGSYEYFEGMGLPELISEVKKVDDNTVQFVLTRPEAPFLADLAMDFASILSKEYADAMMKAGTPEKLDLNPIGTGPFQLQQYQKDSRIRYKAFDGYWGTKPQIDTLVFSITPDASVRYAKLQKNECQVMPYPNPADIARMKQDKSINLMEMPGLNVGYLSYNVQKKPLDDVKVRQALTYAVNKDAIIKAVYQGAGVSAKNLIPPTMWGYNDDVQDYTYDPEKAKALLKEAGLEKGFSIDLWAMPVQRPYNPNARRMAEMIQADWAKVGVQAKIVTYEWGEYLKRAKDGEHQTVMMGWTGDNGDPDNFFATLFSCAASEQGSNYSKWCYKPFEDLIQPARATDDHNKRVELYKQAQVVMHDQAPALIIAHSTVFEPVRKEVKGYVVDPLGKHHFENVSIE</sequence>
<evidence type="ECO:0000269" key="1">
    <source>
    </source>
</evidence>
<evidence type="ECO:0000269" key="2">
    <source>
    </source>
</evidence>
<evidence type="ECO:0000269" key="3">
    <source>
    </source>
</evidence>
<evidence type="ECO:0000269" key="4">
    <source>
    </source>
</evidence>
<evidence type="ECO:0000269" key="5">
    <source>
    </source>
</evidence>
<evidence type="ECO:0000269" key="6">
    <source>
    </source>
</evidence>
<evidence type="ECO:0000269" key="7">
    <source>
    </source>
</evidence>
<evidence type="ECO:0000269" key="8">
    <source>
    </source>
</evidence>
<evidence type="ECO:0000269" key="9">
    <source>
    </source>
</evidence>
<evidence type="ECO:0000269" key="10">
    <source>
    </source>
</evidence>
<evidence type="ECO:0000269" key="11">
    <source>
    </source>
</evidence>
<evidence type="ECO:0000269" key="12">
    <source ref="12"/>
</evidence>
<evidence type="ECO:0000303" key="13">
    <source>
    </source>
</evidence>
<evidence type="ECO:0000303" key="14">
    <source>
    </source>
</evidence>
<evidence type="ECO:0000305" key="15"/>
<evidence type="ECO:0007744" key="16">
    <source>
        <dbReference type="PDB" id="1DPE"/>
    </source>
</evidence>
<evidence type="ECO:0007744" key="17">
    <source>
        <dbReference type="PDB" id="1DPP"/>
    </source>
</evidence>
<evidence type="ECO:0007829" key="18">
    <source>
        <dbReference type="PDB" id="1DPE"/>
    </source>
</evidence>
<organism>
    <name type="scientific">Escherichia coli (strain K12)</name>
    <dbReference type="NCBI Taxonomy" id="83333"/>
    <lineage>
        <taxon>Bacteria</taxon>
        <taxon>Pseudomonadati</taxon>
        <taxon>Pseudomonadota</taxon>
        <taxon>Gammaproteobacteria</taxon>
        <taxon>Enterobacterales</taxon>
        <taxon>Enterobacteriaceae</taxon>
        <taxon>Escherichia</taxon>
    </lineage>
</organism>
<proteinExistence type="evidence at protein level"/>